<feature type="chain" id="PRO_0000323480" description="ADP-L-glycero-D-manno-heptose-6-epimerase">
    <location>
        <begin position="1"/>
        <end position="330"/>
    </location>
</feature>
<feature type="active site" description="Proton acceptor" evidence="1">
    <location>
        <position position="139"/>
    </location>
</feature>
<feature type="active site" description="Proton acceptor" evidence="1">
    <location>
        <position position="177"/>
    </location>
</feature>
<feature type="binding site" evidence="1">
    <location>
        <begin position="11"/>
        <end position="12"/>
    </location>
    <ligand>
        <name>NADP(+)</name>
        <dbReference type="ChEBI" id="CHEBI:58349"/>
    </ligand>
</feature>
<feature type="binding site" evidence="1">
    <location>
        <begin position="32"/>
        <end position="33"/>
    </location>
    <ligand>
        <name>NADP(+)</name>
        <dbReference type="ChEBI" id="CHEBI:58349"/>
    </ligand>
</feature>
<feature type="binding site" evidence="1">
    <location>
        <position position="39"/>
    </location>
    <ligand>
        <name>NADP(+)</name>
        <dbReference type="ChEBI" id="CHEBI:58349"/>
    </ligand>
</feature>
<feature type="binding site" evidence="1">
    <location>
        <position position="54"/>
    </location>
    <ligand>
        <name>NADP(+)</name>
        <dbReference type="ChEBI" id="CHEBI:58349"/>
    </ligand>
</feature>
<feature type="binding site" evidence="1">
    <location>
        <begin position="75"/>
        <end position="79"/>
    </location>
    <ligand>
        <name>NADP(+)</name>
        <dbReference type="ChEBI" id="CHEBI:58349"/>
    </ligand>
</feature>
<feature type="binding site" evidence="1">
    <location>
        <position position="92"/>
    </location>
    <ligand>
        <name>NADP(+)</name>
        <dbReference type="ChEBI" id="CHEBI:58349"/>
    </ligand>
</feature>
<feature type="binding site" evidence="1">
    <location>
        <position position="143"/>
    </location>
    <ligand>
        <name>NADP(+)</name>
        <dbReference type="ChEBI" id="CHEBI:58349"/>
    </ligand>
</feature>
<feature type="binding site" evidence="1">
    <location>
        <position position="168"/>
    </location>
    <ligand>
        <name>substrate</name>
    </ligand>
</feature>
<feature type="binding site" evidence="1">
    <location>
        <position position="169"/>
    </location>
    <ligand>
        <name>NADP(+)</name>
        <dbReference type="ChEBI" id="CHEBI:58349"/>
    </ligand>
</feature>
<feature type="binding site" evidence="1">
    <location>
        <position position="177"/>
    </location>
    <ligand>
        <name>NADP(+)</name>
        <dbReference type="ChEBI" id="CHEBI:58349"/>
    </ligand>
</feature>
<feature type="binding site" evidence="1">
    <location>
        <position position="179"/>
    </location>
    <ligand>
        <name>substrate</name>
    </ligand>
</feature>
<feature type="binding site" evidence="1">
    <location>
        <position position="186"/>
    </location>
    <ligand>
        <name>substrate</name>
    </ligand>
</feature>
<feature type="binding site" evidence="1">
    <location>
        <begin position="200"/>
        <end position="203"/>
    </location>
    <ligand>
        <name>substrate</name>
    </ligand>
</feature>
<feature type="binding site" evidence="1">
    <location>
        <position position="213"/>
    </location>
    <ligand>
        <name>substrate</name>
    </ligand>
</feature>
<feature type="binding site" evidence="1">
    <location>
        <position position="292"/>
    </location>
    <ligand>
        <name>substrate</name>
    </ligand>
</feature>
<dbReference type="EC" id="5.1.3.20" evidence="1"/>
<dbReference type="EMBL" id="CP000438">
    <property type="protein sequence ID" value="ABJ12588.1"/>
    <property type="status" value="ALT_INIT"/>
    <property type="molecule type" value="Genomic_DNA"/>
</dbReference>
<dbReference type="RefSeq" id="WP_003106207.1">
    <property type="nucleotide sequence ID" value="NZ_CP034244.1"/>
</dbReference>
<dbReference type="SMR" id="Q02QH1"/>
<dbReference type="KEGG" id="pau:PA14_20890"/>
<dbReference type="PseudoCAP" id="PA14_20890"/>
<dbReference type="HOGENOM" id="CLU_007383_1_3_6"/>
<dbReference type="UniPathway" id="UPA00356">
    <property type="reaction ID" value="UER00440"/>
</dbReference>
<dbReference type="Proteomes" id="UP000000653">
    <property type="component" value="Chromosome"/>
</dbReference>
<dbReference type="GO" id="GO:0008712">
    <property type="term" value="F:ADP-glyceromanno-heptose 6-epimerase activity"/>
    <property type="evidence" value="ECO:0007669"/>
    <property type="project" value="UniProtKB-UniRule"/>
</dbReference>
<dbReference type="GO" id="GO:0050661">
    <property type="term" value="F:NADP binding"/>
    <property type="evidence" value="ECO:0007669"/>
    <property type="project" value="InterPro"/>
</dbReference>
<dbReference type="GO" id="GO:0097171">
    <property type="term" value="P:ADP-L-glycero-beta-D-manno-heptose biosynthetic process"/>
    <property type="evidence" value="ECO:0007669"/>
    <property type="project" value="UniProtKB-UniPathway"/>
</dbReference>
<dbReference type="GO" id="GO:0005975">
    <property type="term" value="P:carbohydrate metabolic process"/>
    <property type="evidence" value="ECO:0007669"/>
    <property type="project" value="UniProtKB-UniRule"/>
</dbReference>
<dbReference type="CDD" id="cd05248">
    <property type="entry name" value="ADP_GME_SDR_e"/>
    <property type="match status" value="1"/>
</dbReference>
<dbReference type="Gene3D" id="3.40.50.720">
    <property type="entry name" value="NAD(P)-binding Rossmann-like Domain"/>
    <property type="match status" value="1"/>
</dbReference>
<dbReference type="Gene3D" id="3.90.25.10">
    <property type="entry name" value="UDP-galactose 4-epimerase, domain 1"/>
    <property type="match status" value="1"/>
</dbReference>
<dbReference type="HAMAP" id="MF_01601">
    <property type="entry name" value="Heptose_epimerase"/>
    <property type="match status" value="1"/>
</dbReference>
<dbReference type="InterPro" id="IPR001509">
    <property type="entry name" value="Epimerase_deHydtase"/>
</dbReference>
<dbReference type="InterPro" id="IPR011912">
    <property type="entry name" value="Heptose_epim"/>
</dbReference>
<dbReference type="InterPro" id="IPR036291">
    <property type="entry name" value="NAD(P)-bd_dom_sf"/>
</dbReference>
<dbReference type="NCBIfam" id="TIGR02197">
    <property type="entry name" value="heptose_epim"/>
    <property type="match status" value="1"/>
</dbReference>
<dbReference type="PANTHER" id="PTHR43103:SF3">
    <property type="entry name" value="ADP-L-GLYCERO-D-MANNO-HEPTOSE-6-EPIMERASE"/>
    <property type="match status" value="1"/>
</dbReference>
<dbReference type="PANTHER" id="PTHR43103">
    <property type="entry name" value="NUCLEOSIDE-DIPHOSPHATE-SUGAR EPIMERASE"/>
    <property type="match status" value="1"/>
</dbReference>
<dbReference type="Pfam" id="PF01370">
    <property type="entry name" value="Epimerase"/>
    <property type="match status" value="1"/>
</dbReference>
<dbReference type="SUPFAM" id="SSF51735">
    <property type="entry name" value="NAD(P)-binding Rossmann-fold domains"/>
    <property type="match status" value="1"/>
</dbReference>
<evidence type="ECO:0000255" key="1">
    <source>
        <dbReference type="HAMAP-Rule" id="MF_01601"/>
    </source>
</evidence>
<evidence type="ECO:0000305" key="2"/>
<accession>Q02QH1</accession>
<gene>
    <name evidence="1" type="primary">hldD</name>
    <name type="synonym">rfaD</name>
    <name type="ordered locus">PA14_20890</name>
</gene>
<protein>
    <recommendedName>
        <fullName evidence="1">ADP-L-glycero-D-manno-heptose-6-epimerase</fullName>
        <ecNumber evidence="1">5.1.3.20</ecNumber>
    </recommendedName>
    <alternativeName>
        <fullName evidence="1">ADP-L-glycero-beta-D-manno-heptose-6-epimerase</fullName>
        <shortName evidence="1">ADP-glyceromanno-heptose 6-epimerase</shortName>
        <shortName evidence="1">ADP-hep 6-epimerase</shortName>
        <shortName evidence="1">AGME</shortName>
    </alternativeName>
</protein>
<comment type="function">
    <text evidence="1">Catalyzes the interconversion between ADP-D-glycero-beta-D-manno-heptose and ADP-L-glycero-beta-D-manno-heptose via an epimerization at carbon 6 of the heptose.</text>
</comment>
<comment type="catalytic activity">
    <reaction evidence="1">
        <text>ADP-D-glycero-beta-D-manno-heptose = ADP-L-glycero-beta-D-manno-heptose</text>
        <dbReference type="Rhea" id="RHEA:17577"/>
        <dbReference type="ChEBI" id="CHEBI:59967"/>
        <dbReference type="ChEBI" id="CHEBI:61506"/>
        <dbReference type="EC" id="5.1.3.20"/>
    </reaction>
</comment>
<comment type="cofactor">
    <cofactor evidence="1">
        <name>NADP(+)</name>
        <dbReference type="ChEBI" id="CHEBI:58349"/>
    </cofactor>
    <text evidence="1">Binds 1 NADP(+) per subunit.</text>
</comment>
<comment type="pathway">
    <text evidence="1">Nucleotide-sugar biosynthesis; ADP-L-glycero-beta-D-manno-heptose biosynthesis; ADP-L-glycero-beta-D-manno-heptose from D-glycero-beta-D-manno-heptose 7-phosphate: step 4/4.</text>
</comment>
<comment type="subunit">
    <text evidence="1">Homopentamer.</text>
</comment>
<comment type="domain">
    <text evidence="1">Contains a large N-terminal NADP-binding domain, and a smaller C-terminal substrate-binding domain.</text>
</comment>
<comment type="similarity">
    <text evidence="1">Belongs to the NAD(P)-dependent epimerase/dehydratase family. HldD subfamily.</text>
</comment>
<comment type="sequence caution" evidence="2">
    <conflict type="erroneous initiation">
        <sequence resource="EMBL-CDS" id="ABJ12588"/>
    </conflict>
</comment>
<reference key="1">
    <citation type="journal article" date="2006" name="Genome Biol.">
        <title>Genomic analysis reveals that Pseudomonas aeruginosa virulence is combinatorial.</title>
        <authorList>
            <person name="Lee D.G."/>
            <person name="Urbach J.M."/>
            <person name="Wu G."/>
            <person name="Liberati N.T."/>
            <person name="Feinbaum R.L."/>
            <person name="Miyata S."/>
            <person name="Diggins L.T."/>
            <person name="He J."/>
            <person name="Saucier M."/>
            <person name="Deziel E."/>
            <person name="Friedman L."/>
            <person name="Li L."/>
            <person name="Grills G."/>
            <person name="Montgomery K."/>
            <person name="Kucherlapati R."/>
            <person name="Rahme L.G."/>
            <person name="Ausubel F.M."/>
        </authorList>
    </citation>
    <scope>NUCLEOTIDE SEQUENCE [LARGE SCALE GENOMIC DNA]</scope>
    <source>
        <strain>UCBPP-PA14</strain>
    </source>
</reference>
<name>HLDD_PSEAB</name>
<sequence length="330" mass="37173">MSIIVTGAAGFIGSNLLQALNRRGETDIIAVDDLTDGEQFRNLADADIADYLDQNDFLERYARGDFGTVRALFHQGACASTLESNGRYMMENNYRYSCRLLESSLELGVPFLYASSAAVYGAGRTFREARQYERPLNVYGYSKFLFDQRVRRALPQARSQVVGLRYFNVYGPREEHKGRMASVAYHCYQQLRRDGRVELFGEHGGFPPGGHLRDFVAVEDVARVNLHFFDHPQRSGIFNLGSGQARTFNEVALAVINSVRANADQPPLSLQQAVESGLLGYREFPESLRARYQSHTCADLELLREAGYRDDFQSLEEGVAGYCRWLARSA</sequence>
<keyword id="KW-0119">Carbohydrate metabolism</keyword>
<keyword id="KW-0413">Isomerase</keyword>
<keyword id="KW-0521">NADP</keyword>
<organism>
    <name type="scientific">Pseudomonas aeruginosa (strain UCBPP-PA14)</name>
    <dbReference type="NCBI Taxonomy" id="208963"/>
    <lineage>
        <taxon>Bacteria</taxon>
        <taxon>Pseudomonadati</taxon>
        <taxon>Pseudomonadota</taxon>
        <taxon>Gammaproteobacteria</taxon>
        <taxon>Pseudomonadales</taxon>
        <taxon>Pseudomonadaceae</taxon>
        <taxon>Pseudomonas</taxon>
    </lineage>
</organism>
<proteinExistence type="inferred from homology"/>